<evidence type="ECO:0000255" key="1">
    <source>
        <dbReference type="HAMAP-Rule" id="MF_01628"/>
    </source>
</evidence>
<organism>
    <name type="scientific">Aliivibrio salmonicida (strain LFI1238)</name>
    <name type="common">Vibrio salmonicida (strain LFI1238)</name>
    <dbReference type="NCBI Taxonomy" id="316275"/>
    <lineage>
        <taxon>Bacteria</taxon>
        <taxon>Pseudomonadati</taxon>
        <taxon>Pseudomonadota</taxon>
        <taxon>Gammaproteobacteria</taxon>
        <taxon>Vibrionales</taxon>
        <taxon>Vibrionaceae</taxon>
        <taxon>Aliivibrio</taxon>
    </lineage>
</organism>
<protein>
    <recommendedName>
        <fullName evidence="1">Thymidine phosphorylase</fullName>
        <ecNumber evidence="1">2.4.2.4</ecNumber>
    </recommendedName>
    <alternativeName>
        <fullName evidence="1">TdRPase</fullName>
    </alternativeName>
</protein>
<gene>
    <name evidence="1" type="primary">deoA</name>
    <name type="ordered locus">VSAL_I0620</name>
</gene>
<proteinExistence type="inferred from homology"/>
<sequence>MYLPQEIIRRKRDNKVLTTEEINFFIQGVAKNTVSEGQIAAFAMAVYFNEMTMPERIALTCAMRDSGMVIDWSHMNFDGPIVDKHSTGGVGDVTSLMLGPMVAACGGYVPMISGRGLGHTGGTLDKLESIAGYNIMPNNDLFGKVTKEAGVAIIGQTGDLAPADKRVYATRDVTATVDNISLITASILSKKLAAGLDSLVMDVKVGSGAFMPTYEASEELAKSIVAVANGAGTKTTALLTDMNQVLASTAGNALEVREAIRFLTGEYRNPRLYEVAMALCAEMLVIANLAKDEQEACIKLQAVLDNGKAAECFGKMVFGLGGPNDIIENYDNHLETAQIIKPVFADKSGFVNTMDTRDLGMAVVGMGGGRRVASDTIDYAVGLSDMIRLGQTVDSNQPLAMIHARNEDQWQQAADAVKAAIVISEEQPEATPEVYRKVRSQDV</sequence>
<accession>B6ENG4</accession>
<comment type="function">
    <text evidence="1">The enzymes which catalyze the reversible phosphorolysis of pyrimidine nucleosides are involved in the degradation of these compounds and in their utilization as carbon and energy sources, or in the rescue of pyrimidine bases for nucleotide synthesis.</text>
</comment>
<comment type="catalytic activity">
    <reaction evidence="1">
        <text>thymidine + phosphate = 2-deoxy-alpha-D-ribose 1-phosphate + thymine</text>
        <dbReference type="Rhea" id="RHEA:16037"/>
        <dbReference type="ChEBI" id="CHEBI:17748"/>
        <dbReference type="ChEBI" id="CHEBI:17821"/>
        <dbReference type="ChEBI" id="CHEBI:43474"/>
        <dbReference type="ChEBI" id="CHEBI:57259"/>
        <dbReference type="EC" id="2.4.2.4"/>
    </reaction>
</comment>
<comment type="pathway">
    <text evidence="1">Pyrimidine metabolism; dTMP biosynthesis via salvage pathway; dTMP from thymine: step 1/2.</text>
</comment>
<comment type="subunit">
    <text evidence="1">Homodimer.</text>
</comment>
<comment type="similarity">
    <text evidence="1">Belongs to the thymidine/pyrimidine-nucleoside phosphorylase family.</text>
</comment>
<keyword id="KW-0328">Glycosyltransferase</keyword>
<keyword id="KW-0808">Transferase</keyword>
<reference key="1">
    <citation type="journal article" date="2008" name="BMC Genomics">
        <title>The genome sequence of the fish pathogen Aliivibrio salmonicida strain LFI1238 shows extensive evidence of gene decay.</title>
        <authorList>
            <person name="Hjerde E."/>
            <person name="Lorentzen M.S."/>
            <person name="Holden M.T."/>
            <person name="Seeger K."/>
            <person name="Paulsen S."/>
            <person name="Bason N."/>
            <person name="Churcher C."/>
            <person name="Harris D."/>
            <person name="Norbertczak H."/>
            <person name="Quail M.A."/>
            <person name="Sanders S."/>
            <person name="Thurston S."/>
            <person name="Parkhill J."/>
            <person name="Willassen N.P."/>
            <person name="Thomson N.R."/>
        </authorList>
    </citation>
    <scope>NUCLEOTIDE SEQUENCE [LARGE SCALE GENOMIC DNA]</scope>
    <source>
        <strain>LFI1238</strain>
    </source>
</reference>
<name>TYPH_ALISL</name>
<feature type="chain" id="PRO_1000186246" description="Thymidine phosphorylase">
    <location>
        <begin position="1"/>
        <end position="443"/>
    </location>
</feature>
<dbReference type="EC" id="2.4.2.4" evidence="1"/>
<dbReference type="EMBL" id="FM178379">
    <property type="protein sequence ID" value="CAQ78305.1"/>
    <property type="molecule type" value="Genomic_DNA"/>
</dbReference>
<dbReference type="RefSeq" id="WP_012549428.1">
    <property type="nucleotide sequence ID" value="NC_011312.1"/>
</dbReference>
<dbReference type="SMR" id="B6ENG4"/>
<dbReference type="KEGG" id="vsa:VSAL_I0620"/>
<dbReference type="eggNOG" id="COG0213">
    <property type="taxonomic scope" value="Bacteria"/>
</dbReference>
<dbReference type="HOGENOM" id="CLU_025040_0_1_6"/>
<dbReference type="UniPathway" id="UPA00578">
    <property type="reaction ID" value="UER00638"/>
</dbReference>
<dbReference type="Proteomes" id="UP000001730">
    <property type="component" value="Chromosome 1"/>
</dbReference>
<dbReference type="GO" id="GO:0005829">
    <property type="term" value="C:cytosol"/>
    <property type="evidence" value="ECO:0007669"/>
    <property type="project" value="TreeGrafter"/>
</dbReference>
<dbReference type="GO" id="GO:0004645">
    <property type="term" value="F:1,4-alpha-oligoglucan phosphorylase activity"/>
    <property type="evidence" value="ECO:0007669"/>
    <property type="project" value="InterPro"/>
</dbReference>
<dbReference type="GO" id="GO:0009032">
    <property type="term" value="F:thymidine phosphorylase activity"/>
    <property type="evidence" value="ECO:0007669"/>
    <property type="project" value="UniProtKB-UniRule"/>
</dbReference>
<dbReference type="GO" id="GO:0006206">
    <property type="term" value="P:pyrimidine nucleobase metabolic process"/>
    <property type="evidence" value="ECO:0007669"/>
    <property type="project" value="InterPro"/>
</dbReference>
<dbReference type="GO" id="GO:0046104">
    <property type="term" value="P:thymidine metabolic process"/>
    <property type="evidence" value="ECO:0007669"/>
    <property type="project" value="UniProtKB-UniRule"/>
</dbReference>
<dbReference type="FunFam" id="3.40.1030.10:FF:000001">
    <property type="entry name" value="Thymidine phosphorylase"/>
    <property type="match status" value="1"/>
</dbReference>
<dbReference type="FunFam" id="3.90.1170.30:FF:000001">
    <property type="entry name" value="Thymidine phosphorylase"/>
    <property type="match status" value="1"/>
</dbReference>
<dbReference type="Gene3D" id="3.40.1030.10">
    <property type="entry name" value="Nucleoside phosphorylase/phosphoribosyltransferase catalytic domain"/>
    <property type="match status" value="1"/>
</dbReference>
<dbReference type="Gene3D" id="3.90.1170.30">
    <property type="entry name" value="Pyrimidine nucleoside phosphorylase-like, C-terminal domain"/>
    <property type="match status" value="1"/>
</dbReference>
<dbReference type="Gene3D" id="1.20.970.10">
    <property type="entry name" value="Transferase, Pyrimidine Nucleoside Phosphorylase, Chain C"/>
    <property type="match status" value="1"/>
</dbReference>
<dbReference type="HAMAP" id="MF_01628">
    <property type="entry name" value="Thymid_phosp"/>
    <property type="match status" value="1"/>
</dbReference>
<dbReference type="InterPro" id="IPR000312">
    <property type="entry name" value="Glycosyl_Trfase_fam3"/>
</dbReference>
<dbReference type="InterPro" id="IPR017459">
    <property type="entry name" value="Glycosyl_Trfase_fam3_N_dom"/>
</dbReference>
<dbReference type="InterPro" id="IPR036320">
    <property type="entry name" value="Glycosyl_Trfase_fam3_N_dom_sf"/>
</dbReference>
<dbReference type="InterPro" id="IPR035902">
    <property type="entry name" value="Nuc_phospho_transferase"/>
</dbReference>
<dbReference type="InterPro" id="IPR036566">
    <property type="entry name" value="PYNP-like_C_sf"/>
</dbReference>
<dbReference type="InterPro" id="IPR013102">
    <property type="entry name" value="PYNP_C"/>
</dbReference>
<dbReference type="InterPro" id="IPR018090">
    <property type="entry name" value="Pyrmidine_PPas_bac/euk"/>
</dbReference>
<dbReference type="InterPro" id="IPR017872">
    <property type="entry name" value="Pyrmidine_PPase_CS"/>
</dbReference>
<dbReference type="InterPro" id="IPR000053">
    <property type="entry name" value="Thymidine/pyrmidine_PPase"/>
</dbReference>
<dbReference type="InterPro" id="IPR013465">
    <property type="entry name" value="Thymidine_Pase"/>
</dbReference>
<dbReference type="NCBIfam" id="NF004490">
    <property type="entry name" value="PRK05820.1"/>
    <property type="match status" value="1"/>
</dbReference>
<dbReference type="NCBIfam" id="TIGR02643">
    <property type="entry name" value="T_phosphoryl"/>
    <property type="match status" value="1"/>
</dbReference>
<dbReference type="NCBIfam" id="TIGR02644">
    <property type="entry name" value="Y_phosphoryl"/>
    <property type="match status" value="1"/>
</dbReference>
<dbReference type="PANTHER" id="PTHR10515">
    <property type="entry name" value="THYMIDINE PHOSPHORYLASE"/>
    <property type="match status" value="1"/>
</dbReference>
<dbReference type="PANTHER" id="PTHR10515:SF0">
    <property type="entry name" value="THYMIDINE PHOSPHORYLASE"/>
    <property type="match status" value="1"/>
</dbReference>
<dbReference type="Pfam" id="PF02885">
    <property type="entry name" value="Glycos_trans_3N"/>
    <property type="match status" value="1"/>
</dbReference>
<dbReference type="Pfam" id="PF00591">
    <property type="entry name" value="Glycos_transf_3"/>
    <property type="match status" value="1"/>
</dbReference>
<dbReference type="Pfam" id="PF07831">
    <property type="entry name" value="PYNP_C"/>
    <property type="match status" value="1"/>
</dbReference>
<dbReference type="PIRSF" id="PIRSF000478">
    <property type="entry name" value="TP_PyNP"/>
    <property type="match status" value="1"/>
</dbReference>
<dbReference type="SMART" id="SM00941">
    <property type="entry name" value="PYNP_C"/>
    <property type="match status" value="1"/>
</dbReference>
<dbReference type="SUPFAM" id="SSF52418">
    <property type="entry name" value="Nucleoside phosphorylase/phosphoribosyltransferase catalytic domain"/>
    <property type="match status" value="1"/>
</dbReference>
<dbReference type="SUPFAM" id="SSF47648">
    <property type="entry name" value="Nucleoside phosphorylase/phosphoribosyltransferase N-terminal domain"/>
    <property type="match status" value="1"/>
</dbReference>
<dbReference type="SUPFAM" id="SSF54680">
    <property type="entry name" value="Pyrimidine nucleoside phosphorylase C-terminal domain"/>
    <property type="match status" value="1"/>
</dbReference>
<dbReference type="PROSITE" id="PS00647">
    <property type="entry name" value="THYMID_PHOSPHORYLASE"/>
    <property type="match status" value="1"/>
</dbReference>